<comment type="function">
    <text evidence="1 5 6">Integral membrane glycoprotein that plays an essential role in the immune response and serves multiple functions in responses against both external and internal offenses. In T-cells, functions primarily as a coreceptor for MHC class I molecule:peptide complex. The antigens presented by class I peptides are derived from cytosolic proteins while class II derived from extracellular proteins. Interacts simultaneously with the T-cell receptor (TCR) and the MHC class I proteins presented by antigen presenting cells (APCs). In turn, recruits the Src kinase LCK to the vicinity of the TCR-CD3 complex. LCK then initiates different intracellular signaling pathways by phosphorylating various substrates ultimately leading to lymphokine production, motility, adhesion and activation of cytotoxic T-lymphocytes (CTLs). This mechanism enables CTLs to recognize and eliminate infected cells and tumor cells. In NK-cells, the presence of CD8A homodimers at the cell surface provides a survival mechanism allowing conjugation and lysis of multiple target cells. CD8A homodimer molecules also promote the survival and differentiation of activated lymphocytes into memory CD8 T-cells.</text>
</comment>
<comment type="subunit">
    <text evidence="1 7 9">Forms disulfide-linked heterodimers with CD8B at the cell surface. Also forms homodimers in several cell types including NK-cells or peripheral blood T-lymphocytes. Interacts with the MHC class I HLA-A/B2M dimer. Interacts with LCK in a zinc-dependent manner.</text>
</comment>
<comment type="interaction">
    <interactant intactId="EBI-1433">
        <id>P01731</id>
    </interactant>
    <interactant intactId="EBI-1401">
        <id>P06240</id>
        <label>Lck</label>
    </interactant>
    <organismsDiffer>false</organismsDiffer>
    <experiments>2</experiments>
</comment>
<comment type="subcellular location">
    <subcellularLocation>
        <location evidence="1">Cell membrane</location>
        <topology evidence="1">Single-pass type I membrane protein</topology>
    </subcellularLocation>
    <text evidence="1">Cd8a localizes to lipid rafts only when associated with its partner Cd8b.</text>
</comment>
<comment type="alternative products">
    <event type="alternative splicing"/>
    <isoform>
        <id>P01731-1</id>
        <name>1</name>
        <sequence type="displayed"/>
    </isoform>
    <text>A number of isoforms are produced. Alternative splicing involves excision of the transmembrane or cytoplasmic domains.</text>
</comment>
<comment type="PTM">
    <text evidence="1">Palmitoylated, but association with CD8B seems to be more important for the enrichment of CdD8A in lipid rafts.</text>
</comment>
<comment type="PTM">
    <text evidence="8">Phosphorylated in cytotoxic T-lymphocytes (CTLs) following activation.</text>
</comment>
<comment type="disruption phenotype">
    <text evidence="6">Cd8a-deficient mice prevent the development of class I MHC restricted cytotoxic T-cells. However, maturation of class II MHC restricted T-helper cells seems to be unaffected by the absence of Cd8a.</text>
</comment>
<proteinExistence type="evidence at protein level"/>
<protein>
    <recommendedName>
        <fullName>T-cell surface glycoprotein CD8 alpha chain</fullName>
    </recommendedName>
    <alternativeName>
        <fullName>T-cell surface glycoprotein Lyt-2</fullName>
    </alternativeName>
    <cdAntigenName>CD8a</cdAntigenName>
</protein>
<keyword id="KW-0002">3D-structure</keyword>
<keyword id="KW-1064">Adaptive immunity</keyword>
<keyword id="KW-0025">Alternative splicing</keyword>
<keyword id="KW-1003">Cell membrane</keyword>
<keyword id="KW-1015">Disulfide bond</keyword>
<keyword id="KW-0325">Glycoprotein</keyword>
<keyword id="KW-0391">Immunity</keyword>
<keyword id="KW-0393">Immunoglobulin domain</keyword>
<keyword id="KW-0449">Lipoprotein</keyword>
<keyword id="KW-0472">Membrane</keyword>
<keyword id="KW-0564">Palmitate</keyword>
<keyword id="KW-1185">Reference proteome</keyword>
<keyword id="KW-0732">Signal</keyword>
<keyword id="KW-0812">Transmembrane</keyword>
<keyword id="KW-1133">Transmembrane helix</keyword>
<sequence>MASPLTRFLSLNLLLLGESIILGSGEAKPQAPELRIFPKKMDAELGQKVDLVCEVLGSVSQGCSWLFQNSSSKLPQPTFVVYMASSHNKITWDEKLNSSKLFSAMRDTNNKYVLTLNKFSKENEGYYFCSVISNSVMYFSSVVPVLQKVNSTTTKPVLRTPSPVHPTGTSQPQRPEDCRPRGSVKGTGLDFACDIYIWAPLAGICVALLLSLIITLICYHRSRKRVCKCPRPLVRQEGKPRPSEKIV</sequence>
<reference key="1">
    <citation type="journal article" date="1985" name="Proc. Natl. Acad. Sci. U.S.A.">
        <title>Molecular cloning of Lyt-2, a membrane glycoprotein marking a subset of mouse T lymphocytes: molecular homology to its human counterpart, Leu-2/T8, and to immunoglobulin variable regions.</title>
        <authorList>
            <person name="Nakauchi H."/>
            <person name="Nolan G.P."/>
            <person name="Hsu C."/>
            <person name="Huang H.S."/>
            <person name="Kavathas P."/>
            <person name="Herzenberg L.A."/>
        </authorList>
    </citation>
    <scope>NUCLEOTIDE SEQUENCE [MRNA]</scope>
    <source>
        <strain>BALB/cJ</strain>
    </source>
</reference>
<reference key="2">
    <citation type="journal article" date="1985" name="Cell">
        <title>Two Lyt-2 polypeptides arise from a single gene by alternative splicing patterns of mRNA.</title>
        <authorList>
            <person name="Zamoyska R."/>
            <person name="Vollmer A.C."/>
            <person name="Sizer K.C."/>
            <person name="Liaw C.W."/>
            <person name="Parnes J.R."/>
        </authorList>
    </citation>
    <scope>NUCLEOTIDE SEQUENCE [MRNA]</scope>
</reference>
<reference key="3">
    <citation type="journal article" date="1987" name="Nucleic Acids Res.">
        <title>Isolation and characterization of the gene for the murine T cell differentiation antigen and immunoglobulin-related molecule, Lyt-2.</title>
        <authorList>
            <person name="Nakauchi H."/>
            <person name="Tagawa M."/>
            <person name="Nolan G.P."/>
            <person name="Herzenberg L.A."/>
        </authorList>
    </citation>
    <scope>NUCLEOTIDE SEQUENCE [GENOMIC DNA]</scope>
</reference>
<reference key="4">
    <citation type="journal article" date="1988" name="Immunogenetics">
        <title>Nucleotide sequence analysis of the C.AKR Lyt-2a gene: structural polymorphism in alleles encoding the Lyt-2.1 T-cell surface alloantigen.</title>
        <authorList>
            <person name="Youn H.J."/>
            <person name="Harriss J.V."/>
            <person name="Gottlieb P.D."/>
        </authorList>
    </citation>
    <scope>NUCLEOTIDE SEQUENCE [GENOMIC DNA]</scope>
    <source>
        <strain>C.AKR</strain>
    </source>
</reference>
<reference key="5">
    <citation type="journal article" date="1986" name="J. Immunol.">
        <title>Structure, sequence, and polymorphism of the Lyt-2 T cell differentiation antigen gene.</title>
        <authorList>
            <person name="Liaw C.W."/>
            <person name="Zamoyska R."/>
            <person name="Parnes J.R."/>
        </authorList>
    </citation>
    <scope>NUCLEOTIDE SEQUENCE [GENOMIC DNA]</scope>
</reference>
<reference key="6">
    <citation type="journal article" date="1989" name="Immunogenetics">
        <title>Phosphorylation and down-regulation of CD4 and CD8 in human CTLs and mouse L cells.</title>
        <authorList>
            <person name="DiSanto J.P."/>
            <person name="Klein J.S."/>
            <person name="Flomenberg N."/>
        </authorList>
    </citation>
    <scope>PHOSPHORYLATION</scope>
</reference>
<reference key="7">
    <citation type="journal article" date="1991" name="Cell">
        <title>CD8 is needed for development of cytotoxic T cells but not helper T cells.</title>
        <authorList>
            <person name="Fung-Leung W.P."/>
            <person name="Schilham M.W."/>
            <person name="Rahemtulla A."/>
            <person name="Kuendig T.M."/>
            <person name="Vollenweider M."/>
            <person name="Potter J."/>
            <person name="van Ewijk W."/>
            <person name="Mak T.W."/>
        </authorList>
    </citation>
    <scope>DISRUPTION PHENOTYPE</scope>
    <scope>FUNCTION</scope>
</reference>
<reference key="8">
    <citation type="journal article" date="2004" name="Science">
        <title>CD8alphaalpha-mediated survival and differentiation of CD8 memory T cell precursors.</title>
        <authorList>
            <person name="Madakamutil L.T."/>
            <person name="Christen U."/>
            <person name="Lena C.J."/>
            <person name="Wang-Zhu Y."/>
            <person name="Attinger A."/>
            <person name="Sundarrajan M."/>
            <person name="Ellmeier W."/>
            <person name="von Herrath M.G."/>
            <person name="Jensen P."/>
            <person name="Littman D.R."/>
            <person name="Cheroutre H."/>
        </authorList>
    </citation>
    <scope>FUNCTION</scope>
</reference>
<reference key="9">
    <citation type="journal article" date="1998" name="Immunity">
        <title>Structural basis of CD8 coreceptor function revealed by crystallographic analysis of a murine CD8alphaalpha ectodomain fragment in complex with H-2Kb.</title>
        <authorList>
            <person name="Kern P.S."/>
            <person name="Teng M.K."/>
            <person name="Smolyar A."/>
            <person name="Liu J.H."/>
            <person name="Liu J."/>
            <person name="Hussey R.E."/>
            <person name="Spoerl R."/>
            <person name="Chang H.-C."/>
            <person name="Reinherz E.L."/>
            <person name="Wang J.-H."/>
        </authorList>
    </citation>
    <scope>X-RAY CRYSTALLOGRAPHY (2.8 ANGSTROMS) OF 28-152 IN COMPLEX WITH H-2KB</scope>
</reference>
<reference key="10">
    <citation type="journal article" date="2008" name="J. Mol. Biol.">
        <title>The crystal structure of CD8 in complex with YTS156.7.7 Fab and interaction with other CD8 antibodies define the binding mode of CD8 alphabeta to MHC class I.</title>
        <authorList>
            <person name="Shore D.A."/>
            <person name="Issafras H."/>
            <person name="Landais E."/>
            <person name="Teyton L."/>
            <person name="Wilson I.A."/>
        </authorList>
    </citation>
    <scope>X-RAY CRYSTALLOGRAPHY (2.7 ANGSTROMS) OF 28-151 IN COMPLEX WITH CD8B AND ANTIBODY</scope>
    <scope>SUBUNIT</scope>
    <scope>DISULFIDE BOND</scope>
    <scope>GLYCOSYLATION AT ASN-69</scope>
</reference>
<evidence type="ECO:0000250" key="1">
    <source>
        <dbReference type="UniProtKB" id="P01732"/>
    </source>
</evidence>
<evidence type="ECO:0000255" key="2"/>
<evidence type="ECO:0000255" key="3">
    <source>
        <dbReference type="PROSITE-ProRule" id="PRU00114"/>
    </source>
</evidence>
<evidence type="ECO:0000256" key="4">
    <source>
        <dbReference type="SAM" id="MobiDB-lite"/>
    </source>
</evidence>
<evidence type="ECO:0000269" key="5">
    <source>
    </source>
</evidence>
<evidence type="ECO:0000269" key="6">
    <source>
    </source>
</evidence>
<evidence type="ECO:0000269" key="7">
    <source>
    </source>
</evidence>
<evidence type="ECO:0000269" key="8">
    <source>
    </source>
</evidence>
<evidence type="ECO:0000269" key="9">
    <source>
    </source>
</evidence>
<evidence type="ECO:0000305" key="10"/>
<evidence type="ECO:0007829" key="11">
    <source>
        <dbReference type="PDB" id="1NEZ"/>
    </source>
</evidence>
<organism>
    <name type="scientific">Mus musculus</name>
    <name type="common">Mouse</name>
    <dbReference type="NCBI Taxonomy" id="10090"/>
    <lineage>
        <taxon>Eukaryota</taxon>
        <taxon>Metazoa</taxon>
        <taxon>Chordata</taxon>
        <taxon>Craniata</taxon>
        <taxon>Vertebrata</taxon>
        <taxon>Euteleostomi</taxon>
        <taxon>Mammalia</taxon>
        <taxon>Eutheria</taxon>
        <taxon>Euarchontoglires</taxon>
        <taxon>Glires</taxon>
        <taxon>Rodentia</taxon>
        <taxon>Myomorpha</taxon>
        <taxon>Muroidea</taxon>
        <taxon>Muridae</taxon>
        <taxon>Murinae</taxon>
        <taxon>Mus</taxon>
        <taxon>Mus</taxon>
    </lineage>
</organism>
<name>CD8A_MOUSE</name>
<gene>
    <name type="primary">Cd8a</name>
    <name type="synonym">Lyt-2</name>
    <name type="synonym">Lyt2</name>
</gene>
<dbReference type="EMBL" id="M12825">
    <property type="protein sequence ID" value="AAA39476.1"/>
    <property type="molecule type" value="mRNA"/>
</dbReference>
<dbReference type="EMBL" id="M16981">
    <property type="protein sequence ID" value="AAA39477.1"/>
    <property type="status" value="ALT_TERM"/>
    <property type="molecule type" value="mRNA"/>
</dbReference>
<dbReference type="EMBL" id="M12052">
    <property type="protein sequence ID" value="AAA39478.1"/>
    <property type="molecule type" value="mRNA"/>
</dbReference>
<dbReference type="EMBL" id="Y00157">
    <property type="protein sequence ID" value="CAA68352.2"/>
    <property type="molecule type" value="Genomic_DNA"/>
</dbReference>
<dbReference type="EMBL" id="M22064">
    <property type="protein sequence ID" value="AAA39665.1"/>
    <property type="molecule type" value="Genomic_DNA"/>
</dbReference>
<dbReference type="EMBL" id="M12977">
    <property type="protein sequence ID" value="AAA39475.1"/>
    <property type="molecule type" value="Genomic_DNA"/>
</dbReference>
<dbReference type="EMBL" id="M12819">
    <property type="protein sequence ID" value="AAA39475.1"/>
    <property type="status" value="JOINED"/>
    <property type="molecule type" value="Genomic_DNA"/>
</dbReference>
<dbReference type="EMBL" id="M12975">
    <property type="protein sequence ID" value="AAA39475.1"/>
    <property type="status" value="JOINED"/>
    <property type="molecule type" value="Genomic_DNA"/>
</dbReference>
<dbReference type="EMBL" id="M12976">
    <property type="protein sequence ID" value="AAA39475.1"/>
    <property type="status" value="JOINED"/>
    <property type="molecule type" value="Genomic_DNA"/>
</dbReference>
<dbReference type="CCDS" id="CCDS39507.1">
    <molecule id="P01731-1"/>
</dbReference>
<dbReference type="PIR" id="A01998">
    <property type="entry name" value="RWMST2"/>
</dbReference>
<dbReference type="PIR" id="A29523">
    <property type="entry name" value="A29523"/>
</dbReference>
<dbReference type="PIR" id="A34954">
    <property type="entry name" value="A34954"/>
</dbReference>
<dbReference type="RefSeq" id="NP_001074579.1">
    <molecule id="P01731-1"/>
    <property type="nucleotide sequence ID" value="NM_001081110.2"/>
</dbReference>
<dbReference type="PDB" id="1BQH">
    <property type="method" value="X-ray"/>
    <property type="resolution" value="2.80 A"/>
    <property type="chains" value="G/H/I/K=28-156"/>
</dbReference>
<dbReference type="PDB" id="1NEZ">
    <property type="method" value="X-ray"/>
    <property type="resolution" value="2.10 A"/>
    <property type="chains" value="G/H=28-149"/>
</dbReference>
<dbReference type="PDB" id="2ARJ">
    <property type="method" value="X-ray"/>
    <property type="resolution" value="2.88 A"/>
    <property type="chains" value="Q/R=28-150"/>
</dbReference>
<dbReference type="PDB" id="2ATP">
    <property type="method" value="X-ray"/>
    <property type="resolution" value="2.40 A"/>
    <property type="chains" value="A/C=28-149"/>
</dbReference>
<dbReference type="PDB" id="3B9K">
    <property type="method" value="X-ray"/>
    <property type="resolution" value="2.70 A"/>
    <property type="chains" value="A/E=28-151"/>
</dbReference>
<dbReference type="PDB" id="3DMM">
    <property type="method" value="X-ray"/>
    <property type="resolution" value="2.60 A"/>
    <property type="chains" value="C=23-188"/>
</dbReference>
<dbReference type="PDBsum" id="1BQH"/>
<dbReference type="PDBsum" id="1NEZ"/>
<dbReference type="PDBsum" id="2ARJ"/>
<dbReference type="PDBsum" id="2ATP"/>
<dbReference type="PDBsum" id="3B9K"/>
<dbReference type="PDBsum" id="3DMM"/>
<dbReference type="SMR" id="P01731"/>
<dbReference type="ComplexPortal" id="CPX-6702">
    <property type="entry name" value="CD8alpha-beta complex"/>
</dbReference>
<dbReference type="ComplexPortal" id="CPX-6742">
    <property type="entry name" value="CD8alpha-alpha complex"/>
</dbReference>
<dbReference type="FunCoup" id="P01731">
    <property type="interactions" value="871"/>
</dbReference>
<dbReference type="IntAct" id="P01731">
    <property type="interactions" value="4"/>
</dbReference>
<dbReference type="MINT" id="P01731"/>
<dbReference type="STRING" id="10090.ENSMUSP00000068123"/>
<dbReference type="GlyCosmos" id="P01731">
    <property type="glycosylation" value="3 sites, No reported glycans"/>
</dbReference>
<dbReference type="GlyGen" id="P01731">
    <property type="glycosylation" value="3 sites"/>
</dbReference>
<dbReference type="iPTMnet" id="P01731"/>
<dbReference type="PhosphoSitePlus" id="P01731"/>
<dbReference type="PaxDb" id="10090-ENSMUSP00000068123"/>
<dbReference type="ProteomicsDB" id="281350">
    <molecule id="P01731-1"/>
</dbReference>
<dbReference type="ABCD" id="P01731">
    <property type="antibodies" value="12 sequenced antibodies"/>
</dbReference>
<dbReference type="Antibodypedia" id="3495">
    <property type="antibodies" value="5265 antibodies from 58 providers"/>
</dbReference>
<dbReference type="DNASU" id="12525"/>
<dbReference type="Ensembl" id="ENSMUST00000066747.14">
    <molecule id="P01731-1"/>
    <property type="protein sequence ID" value="ENSMUSP00000068123.8"/>
    <property type="gene ID" value="ENSMUSG00000053977.14"/>
</dbReference>
<dbReference type="GeneID" id="12525"/>
<dbReference type="KEGG" id="mmu:12525"/>
<dbReference type="UCSC" id="uc009cgr.1">
    <molecule id="P01731-1"/>
    <property type="organism name" value="mouse"/>
</dbReference>
<dbReference type="AGR" id="MGI:88346"/>
<dbReference type="CTD" id="925"/>
<dbReference type="MGI" id="MGI:88346">
    <property type="gene designation" value="Cd8a"/>
</dbReference>
<dbReference type="VEuPathDB" id="HostDB:ENSMUSG00000053977"/>
<dbReference type="eggNOG" id="ENOG502SAZN">
    <property type="taxonomic scope" value="Eukaryota"/>
</dbReference>
<dbReference type="GeneTree" id="ENSGT00940000156588"/>
<dbReference type="HOGENOM" id="CLU_085753_0_0_1"/>
<dbReference type="InParanoid" id="P01731"/>
<dbReference type="OMA" id="KCKCIRP"/>
<dbReference type="OrthoDB" id="9906515at2759"/>
<dbReference type="PhylomeDB" id="P01731"/>
<dbReference type="TreeFam" id="TF336070"/>
<dbReference type="Reactome" id="R-MMU-198933">
    <property type="pathway name" value="Immunoregulatory interactions between a Lymphoid and a non-Lymphoid cell"/>
</dbReference>
<dbReference type="BioGRID-ORCS" id="12525">
    <property type="hits" value="1 hit in 79 CRISPR screens"/>
</dbReference>
<dbReference type="ChiTaRS" id="Cd8a">
    <property type="organism name" value="mouse"/>
</dbReference>
<dbReference type="EvolutionaryTrace" id="P01731"/>
<dbReference type="PRO" id="PR:P01731"/>
<dbReference type="Proteomes" id="UP000000589">
    <property type="component" value="Chromosome 6"/>
</dbReference>
<dbReference type="RNAct" id="P01731">
    <property type="molecule type" value="protein"/>
</dbReference>
<dbReference type="Bgee" id="ENSMUSG00000053977">
    <property type="expression patterns" value="Expressed in thymus and 58 other cell types or tissues"/>
</dbReference>
<dbReference type="ExpressionAtlas" id="P01731">
    <property type="expression patterns" value="baseline and differential"/>
</dbReference>
<dbReference type="GO" id="GO:0009986">
    <property type="term" value="C:cell surface"/>
    <property type="evidence" value="ECO:0000314"/>
    <property type="project" value="MGI"/>
</dbReference>
<dbReference type="GO" id="GO:0009897">
    <property type="term" value="C:external side of plasma membrane"/>
    <property type="evidence" value="ECO:0000314"/>
    <property type="project" value="MGI"/>
</dbReference>
<dbReference type="GO" id="GO:0005886">
    <property type="term" value="C:plasma membrane"/>
    <property type="evidence" value="ECO:0000314"/>
    <property type="project" value="ComplexPortal"/>
</dbReference>
<dbReference type="GO" id="GO:0043235">
    <property type="term" value="C:receptor complex"/>
    <property type="evidence" value="ECO:0000353"/>
    <property type="project" value="ComplexPortal"/>
</dbReference>
<dbReference type="GO" id="GO:0042802">
    <property type="term" value="F:identical protein binding"/>
    <property type="evidence" value="ECO:0000353"/>
    <property type="project" value="MGI"/>
</dbReference>
<dbReference type="GO" id="GO:0002250">
    <property type="term" value="P:adaptive immune response"/>
    <property type="evidence" value="ECO:0000303"/>
    <property type="project" value="ComplexPortal"/>
</dbReference>
<dbReference type="GO" id="GO:0019722">
    <property type="term" value="P:calcium-mediated signaling"/>
    <property type="evidence" value="ECO:0000314"/>
    <property type="project" value="MGI"/>
</dbReference>
<dbReference type="GO" id="GO:0007166">
    <property type="term" value="P:cell surface receptor signaling pathway"/>
    <property type="evidence" value="ECO:0000314"/>
    <property type="project" value="MGI"/>
</dbReference>
<dbReference type="GO" id="GO:0045065">
    <property type="term" value="P:cytotoxic T cell differentiation"/>
    <property type="evidence" value="ECO:0000315"/>
    <property type="project" value="MGI"/>
</dbReference>
<dbReference type="GO" id="GO:0051607">
    <property type="term" value="P:defense response to virus"/>
    <property type="evidence" value="ECO:0000314"/>
    <property type="project" value="MGI"/>
</dbReference>
<dbReference type="GO" id="GO:0050850">
    <property type="term" value="P:positive regulation of calcium-mediated signaling"/>
    <property type="evidence" value="ECO:0000314"/>
    <property type="project" value="MGI"/>
</dbReference>
<dbReference type="GO" id="GO:0042110">
    <property type="term" value="P:T cell activation"/>
    <property type="evidence" value="ECO:0000266"/>
    <property type="project" value="ComplexPortal"/>
</dbReference>
<dbReference type="GO" id="GO:0002456">
    <property type="term" value="P:T cell mediated immunity"/>
    <property type="evidence" value="ECO:0000315"/>
    <property type="project" value="MGI"/>
</dbReference>
<dbReference type="GO" id="GO:0050852">
    <property type="term" value="P:T cell receptor signaling pathway"/>
    <property type="evidence" value="ECO:0000266"/>
    <property type="project" value="ComplexPortal"/>
</dbReference>
<dbReference type="CDD" id="cd05720">
    <property type="entry name" value="IgV_CD8_alpha"/>
    <property type="match status" value="1"/>
</dbReference>
<dbReference type="FunFam" id="2.60.40.10:FF:000956">
    <property type="entry name" value="T-cell surface glycoprotein CD8 alpha chain"/>
    <property type="match status" value="1"/>
</dbReference>
<dbReference type="Gene3D" id="2.60.40.10">
    <property type="entry name" value="Immunoglobulins"/>
    <property type="match status" value="1"/>
</dbReference>
<dbReference type="InterPro" id="IPR015468">
    <property type="entry name" value="CD8_asu"/>
</dbReference>
<dbReference type="InterPro" id="IPR007110">
    <property type="entry name" value="Ig-like_dom"/>
</dbReference>
<dbReference type="InterPro" id="IPR036179">
    <property type="entry name" value="Ig-like_dom_sf"/>
</dbReference>
<dbReference type="InterPro" id="IPR013783">
    <property type="entry name" value="Ig-like_fold"/>
</dbReference>
<dbReference type="InterPro" id="IPR003599">
    <property type="entry name" value="Ig_sub"/>
</dbReference>
<dbReference type="InterPro" id="IPR013106">
    <property type="entry name" value="Ig_V-set"/>
</dbReference>
<dbReference type="PANTHER" id="PTHR10441">
    <property type="entry name" value="CD8 ALPHA CHAIN"/>
    <property type="match status" value="1"/>
</dbReference>
<dbReference type="PANTHER" id="PTHR10441:SF2">
    <property type="entry name" value="T-CELL SURFACE GLYCOPROTEIN CD8 ALPHA CHAIN"/>
    <property type="match status" value="1"/>
</dbReference>
<dbReference type="Pfam" id="PF07686">
    <property type="entry name" value="V-set"/>
    <property type="match status" value="1"/>
</dbReference>
<dbReference type="SMART" id="SM00409">
    <property type="entry name" value="IG"/>
    <property type="match status" value="1"/>
</dbReference>
<dbReference type="SMART" id="SM00406">
    <property type="entry name" value="IGv"/>
    <property type="match status" value="1"/>
</dbReference>
<dbReference type="SUPFAM" id="SSF48726">
    <property type="entry name" value="Immunoglobulin"/>
    <property type="match status" value="1"/>
</dbReference>
<dbReference type="PROSITE" id="PS50835">
    <property type="entry name" value="IG_LIKE"/>
    <property type="match status" value="1"/>
</dbReference>
<accession>P01731</accession>
<feature type="signal peptide">
    <location>
        <begin position="1"/>
        <end position="27"/>
    </location>
</feature>
<feature type="chain" id="PRO_0000014639" description="T-cell surface glycoprotein CD8 alpha chain">
    <location>
        <begin position="28"/>
        <end position="247"/>
    </location>
</feature>
<feature type="topological domain" description="Extracellular" evidence="2">
    <location>
        <begin position="28"/>
        <end position="196"/>
    </location>
</feature>
<feature type="transmembrane region" description="Helical" evidence="2">
    <location>
        <begin position="197"/>
        <end position="217"/>
    </location>
</feature>
<feature type="topological domain" description="Cytoplasmic" evidence="2">
    <location>
        <begin position="218"/>
        <end position="247"/>
    </location>
</feature>
<feature type="domain" description="Ig-like V-type">
    <location>
        <begin position="28"/>
        <end position="139"/>
    </location>
</feature>
<feature type="region of interest" description="Disordered" evidence="4">
    <location>
        <begin position="156"/>
        <end position="182"/>
    </location>
</feature>
<feature type="glycosylation site" description="N-linked (GlcNAc...) asparagine" evidence="7">
    <location>
        <position position="69"/>
    </location>
</feature>
<feature type="glycosylation site" description="N-linked (GlcNAc...) asparagine">
    <location>
        <position position="97"/>
    </location>
</feature>
<feature type="glycosylation site" description="N-linked (GlcNAc...) asparagine">
    <location>
        <position position="150"/>
    </location>
</feature>
<feature type="disulfide bond" evidence="3 7">
    <location>
        <begin position="53"/>
        <end position="129"/>
    </location>
</feature>
<feature type="sequence variant" description="In strain: C.AKR.">
    <original>M</original>
    <variation>V</variation>
    <location>
        <position position="105"/>
    </location>
</feature>
<feature type="sequence conflict" description="In Ref. 3; AAA39477/CAA68352." evidence="10" ref="3">
    <location>
        <position position="81"/>
    </location>
</feature>
<feature type="strand" evidence="11">
    <location>
        <begin position="33"/>
        <end position="39"/>
    </location>
</feature>
<feature type="strand" evidence="11">
    <location>
        <begin position="41"/>
        <end position="43"/>
    </location>
</feature>
<feature type="strand" evidence="11">
    <location>
        <begin position="49"/>
        <end position="57"/>
    </location>
</feature>
<feature type="strand" evidence="11">
    <location>
        <begin position="63"/>
        <end position="71"/>
    </location>
</feature>
<feature type="strand" evidence="11">
    <location>
        <begin position="78"/>
        <end position="83"/>
    </location>
</feature>
<feature type="strand" evidence="11">
    <location>
        <begin position="85"/>
        <end position="87"/>
    </location>
</feature>
<feature type="strand" evidence="11">
    <location>
        <begin position="90"/>
        <end position="92"/>
    </location>
</feature>
<feature type="turn" evidence="11">
    <location>
        <begin position="94"/>
        <end position="97"/>
    </location>
</feature>
<feature type="helix" evidence="11">
    <location>
        <begin position="98"/>
        <end position="100"/>
    </location>
</feature>
<feature type="strand" evidence="11">
    <location>
        <begin position="102"/>
        <end position="107"/>
    </location>
</feature>
<feature type="turn" evidence="11">
    <location>
        <begin position="108"/>
        <end position="110"/>
    </location>
</feature>
<feature type="strand" evidence="11">
    <location>
        <begin position="111"/>
        <end position="118"/>
    </location>
</feature>
<feature type="helix" evidence="11">
    <location>
        <begin position="121"/>
        <end position="123"/>
    </location>
</feature>
<feature type="strand" evidence="11">
    <location>
        <begin position="125"/>
        <end position="133"/>
    </location>
</feature>
<feature type="strand" evidence="11">
    <location>
        <begin position="136"/>
        <end position="139"/>
    </location>
</feature>
<feature type="strand" evidence="11">
    <location>
        <begin position="143"/>
        <end position="147"/>
    </location>
</feature>